<comment type="function">
    <text evidence="1">Bifunctional serine/threonine kinase and phosphorylase involved in the regulation of the pyruvate, phosphate dikinase (PPDK) by catalyzing its phosphorylation/dephosphorylation.</text>
</comment>
<comment type="catalytic activity">
    <reaction evidence="1">
        <text>N(tele)-phospho-L-histidyl/L-threonyl-[pyruvate, phosphate dikinase] + ADP = N(tele)-phospho-L-histidyl/O-phospho-L-threonyl-[pyruvate, phosphate dikinase] + AMP + H(+)</text>
        <dbReference type="Rhea" id="RHEA:43692"/>
        <dbReference type="Rhea" id="RHEA-COMP:10650"/>
        <dbReference type="Rhea" id="RHEA-COMP:10651"/>
        <dbReference type="ChEBI" id="CHEBI:15378"/>
        <dbReference type="ChEBI" id="CHEBI:30013"/>
        <dbReference type="ChEBI" id="CHEBI:61977"/>
        <dbReference type="ChEBI" id="CHEBI:83586"/>
        <dbReference type="ChEBI" id="CHEBI:456215"/>
        <dbReference type="ChEBI" id="CHEBI:456216"/>
        <dbReference type="EC" id="2.7.11.32"/>
    </reaction>
</comment>
<comment type="catalytic activity">
    <reaction evidence="1">
        <text>N(tele)-phospho-L-histidyl/O-phospho-L-threonyl-[pyruvate, phosphate dikinase] + phosphate + H(+) = N(tele)-phospho-L-histidyl/L-threonyl-[pyruvate, phosphate dikinase] + diphosphate</text>
        <dbReference type="Rhea" id="RHEA:43696"/>
        <dbReference type="Rhea" id="RHEA-COMP:10650"/>
        <dbReference type="Rhea" id="RHEA-COMP:10651"/>
        <dbReference type="ChEBI" id="CHEBI:15378"/>
        <dbReference type="ChEBI" id="CHEBI:30013"/>
        <dbReference type="ChEBI" id="CHEBI:33019"/>
        <dbReference type="ChEBI" id="CHEBI:43474"/>
        <dbReference type="ChEBI" id="CHEBI:61977"/>
        <dbReference type="ChEBI" id="CHEBI:83586"/>
        <dbReference type="EC" id="2.7.4.27"/>
    </reaction>
</comment>
<comment type="similarity">
    <text evidence="1">Belongs to the pyruvate, phosphate/water dikinase regulatory protein family. PDRP subfamily.</text>
</comment>
<proteinExistence type="inferred from homology"/>
<feature type="chain" id="PRO_1000084463" description="Putative pyruvate, phosphate dikinase regulatory protein">
    <location>
        <begin position="1"/>
        <end position="274"/>
    </location>
</feature>
<feature type="binding site" evidence="1">
    <location>
        <begin position="153"/>
        <end position="160"/>
    </location>
    <ligand>
        <name>ADP</name>
        <dbReference type="ChEBI" id="CHEBI:456216"/>
    </ligand>
</feature>
<protein>
    <recommendedName>
        <fullName evidence="1">Putative pyruvate, phosphate dikinase regulatory protein</fullName>
        <shortName evidence="1">PPDK regulatory protein</shortName>
        <ecNumber evidence="1">2.7.11.32</ecNumber>
        <ecNumber evidence="1">2.7.4.27</ecNumber>
    </recommendedName>
</protein>
<accession>A9IKX8</accession>
<reference key="1">
    <citation type="journal article" date="2007" name="Nat. Genet.">
        <title>Genomic analysis of Bartonella identifies type IV secretion systems as host adaptability factors.</title>
        <authorList>
            <person name="Saenz H.L."/>
            <person name="Engel P."/>
            <person name="Stoeckli M.C."/>
            <person name="Lanz C."/>
            <person name="Raddatz G."/>
            <person name="Vayssier-Taussat M."/>
            <person name="Birtles R."/>
            <person name="Schuster S.C."/>
            <person name="Dehio C."/>
        </authorList>
    </citation>
    <scope>NUCLEOTIDE SEQUENCE [LARGE SCALE GENOMIC DNA]</scope>
    <source>
        <strain>CIP 105476 / IBS 506</strain>
    </source>
</reference>
<keyword id="KW-0418">Kinase</keyword>
<keyword id="KW-0547">Nucleotide-binding</keyword>
<keyword id="KW-0723">Serine/threonine-protein kinase</keyword>
<keyword id="KW-0808">Transferase</keyword>
<sequence length="274" mass="31157">MTKEKKSFHLHMLSDATGETLISVGRAVASQYTTYQATEHIYPMIRNKIQLEKALDEIKQEPGIVLYTMIDEELKLLLQKICKKIKIPCIDILHPVLNAFQSYLGTPTHLRVSAQHDLNADYFRRIEALDFTIEHDDGQSSSNLFEADVILVGISRTSKTPTSIYLANRGIKTANVPLIPNIDLPESLLEAKNSLIIGLIASAERISHIRQNRDLGEGFAFDNYTNRINIAEELIYAKRICERFGWPVIDVTRRSIEETAAAIFELLSRFREEK</sequence>
<evidence type="ECO:0000255" key="1">
    <source>
        <dbReference type="HAMAP-Rule" id="MF_00921"/>
    </source>
</evidence>
<name>PDRP_BART1</name>
<dbReference type="EC" id="2.7.11.32" evidence="1"/>
<dbReference type="EC" id="2.7.4.27" evidence="1"/>
<dbReference type="EMBL" id="AM260525">
    <property type="protein sequence ID" value="CAK00506.1"/>
    <property type="molecule type" value="Genomic_DNA"/>
</dbReference>
<dbReference type="RefSeq" id="WP_012230249.1">
    <property type="nucleotide sequence ID" value="NC_010161.1"/>
</dbReference>
<dbReference type="SMR" id="A9IKX8"/>
<dbReference type="KEGG" id="btr:BT0001"/>
<dbReference type="eggNOG" id="COG1806">
    <property type="taxonomic scope" value="Bacteria"/>
</dbReference>
<dbReference type="HOGENOM" id="CLU_046206_2_0_5"/>
<dbReference type="Proteomes" id="UP000001592">
    <property type="component" value="Chromosome"/>
</dbReference>
<dbReference type="GO" id="GO:0043531">
    <property type="term" value="F:ADP binding"/>
    <property type="evidence" value="ECO:0007669"/>
    <property type="project" value="UniProtKB-UniRule"/>
</dbReference>
<dbReference type="GO" id="GO:0005524">
    <property type="term" value="F:ATP binding"/>
    <property type="evidence" value="ECO:0007669"/>
    <property type="project" value="InterPro"/>
</dbReference>
<dbReference type="GO" id="GO:0016776">
    <property type="term" value="F:phosphotransferase activity, phosphate group as acceptor"/>
    <property type="evidence" value="ECO:0007669"/>
    <property type="project" value="UniProtKB-UniRule"/>
</dbReference>
<dbReference type="GO" id="GO:0004674">
    <property type="term" value="F:protein serine/threonine kinase activity"/>
    <property type="evidence" value="ECO:0007669"/>
    <property type="project" value="UniProtKB-UniRule"/>
</dbReference>
<dbReference type="HAMAP" id="MF_00921">
    <property type="entry name" value="PDRP"/>
    <property type="match status" value="1"/>
</dbReference>
<dbReference type="InterPro" id="IPR005177">
    <property type="entry name" value="Kinase-pyrophosphorylase"/>
</dbReference>
<dbReference type="InterPro" id="IPR026565">
    <property type="entry name" value="PPDK_reg"/>
</dbReference>
<dbReference type="NCBIfam" id="NF003742">
    <property type="entry name" value="PRK05339.1"/>
    <property type="match status" value="1"/>
</dbReference>
<dbReference type="PANTHER" id="PTHR31756">
    <property type="entry name" value="PYRUVATE, PHOSPHATE DIKINASE REGULATORY PROTEIN 1, CHLOROPLASTIC"/>
    <property type="match status" value="1"/>
</dbReference>
<dbReference type="PANTHER" id="PTHR31756:SF3">
    <property type="entry name" value="PYRUVATE, PHOSPHATE DIKINASE REGULATORY PROTEIN 1, CHLOROPLASTIC"/>
    <property type="match status" value="1"/>
</dbReference>
<dbReference type="Pfam" id="PF03618">
    <property type="entry name" value="Kinase-PPPase"/>
    <property type="match status" value="1"/>
</dbReference>
<gene>
    <name type="ordered locus">BT_0001</name>
</gene>
<organism>
    <name type="scientific">Bartonella tribocorum (strain CIP 105476 / IBS 506)</name>
    <dbReference type="NCBI Taxonomy" id="382640"/>
    <lineage>
        <taxon>Bacteria</taxon>
        <taxon>Pseudomonadati</taxon>
        <taxon>Pseudomonadota</taxon>
        <taxon>Alphaproteobacteria</taxon>
        <taxon>Hyphomicrobiales</taxon>
        <taxon>Bartonellaceae</taxon>
        <taxon>Bartonella</taxon>
    </lineage>
</organism>